<accession>Q49XE6</accession>
<dbReference type="EMBL" id="AP008934">
    <property type="protein sequence ID" value="BAE18551.1"/>
    <property type="molecule type" value="Genomic_DNA"/>
</dbReference>
<dbReference type="RefSeq" id="WP_002483372.1">
    <property type="nucleotide sequence ID" value="NZ_MTGA01000038.1"/>
</dbReference>
<dbReference type="SMR" id="Q49XE6"/>
<dbReference type="KEGG" id="ssp:SSP1406"/>
<dbReference type="eggNOG" id="COG4841">
    <property type="taxonomic scope" value="Bacteria"/>
</dbReference>
<dbReference type="HOGENOM" id="CLU_163967_0_0_9"/>
<dbReference type="OrthoDB" id="1645729at2"/>
<dbReference type="Proteomes" id="UP000006371">
    <property type="component" value="Chromosome"/>
</dbReference>
<dbReference type="InterPro" id="IPR035903">
    <property type="entry name" value="HesB-like_dom_sf"/>
</dbReference>
<dbReference type="InterPro" id="IPR008326">
    <property type="entry name" value="PdhI-like"/>
</dbReference>
<dbReference type="PIRSF" id="PIRSF034852">
    <property type="entry name" value="UCP034852"/>
    <property type="match status" value="1"/>
</dbReference>
<dbReference type="SUPFAM" id="SSF89360">
    <property type="entry name" value="HesB-like domain"/>
    <property type="match status" value="1"/>
</dbReference>
<gene>
    <name type="ordered locus">SSP1406</name>
</gene>
<organism>
    <name type="scientific">Staphylococcus saprophyticus subsp. saprophyticus (strain ATCC 15305 / DSM 20229 / NCIMB 8711 / NCTC 7292 / S-41)</name>
    <dbReference type="NCBI Taxonomy" id="342451"/>
    <lineage>
        <taxon>Bacteria</taxon>
        <taxon>Bacillati</taxon>
        <taxon>Bacillota</taxon>
        <taxon>Bacilli</taxon>
        <taxon>Bacillales</taxon>
        <taxon>Staphylococcaceae</taxon>
        <taxon>Staphylococcus</taxon>
    </lineage>
</organism>
<keyword id="KW-1185">Reference proteome</keyword>
<comment type="similarity">
    <text evidence="1">Belongs to the HesB/IscA family.</text>
</comment>
<feature type="chain" id="PRO_0000300092" description="Uncharacterized protein SSP1406">
    <location>
        <begin position="1"/>
        <end position="98"/>
    </location>
</feature>
<name>Y1406_STAS1</name>
<reference key="1">
    <citation type="journal article" date="2005" name="Proc. Natl. Acad. Sci. U.S.A.">
        <title>Whole genome sequence of Staphylococcus saprophyticus reveals the pathogenesis of uncomplicated urinary tract infection.</title>
        <authorList>
            <person name="Kuroda M."/>
            <person name="Yamashita A."/>
            <person name="Hirakawa H."/>
            <person name="Kumano M."/>
            <person name="Morikawa K."/>
            <person name="Higashide M."/>
            <person name="Maruyama A."/>
            <person name="Inose Y."/>
            <person name="Matoba K."/>
            <person name="Toh H."/>
            <person name="Kuhara S."/>
            <person name="Hattori M."/>
            <person name="Ohta T."/>
        </authorList>
    </citation>
    <scope>NUCLEOTIDE SEQUENCE [LARGE SCALE GENOMIC DNA]</scope>
    <source>
        <strain>ATCC 15305 / DSM 20229 / NCIMB 8711 / NCTC 7292 / S-41</strain>
    </source>
</reference>
<evidence type="ECO:0000305" key="1"/>
<protein>
    <recommendedName>
        <fullName>Uncharacterized protein SSP1406</fullName>
    </recommendedName>
</protein>
<sequence length="98" mass="11419">MEIELSNNAVSWFKEELELPEGDKVLQFFVRYGGEFQLKQGFSPAFSVDKKEDVEIGYENHYDGLDVVIAEKDLWYFEDHNLFIDVNDGIDEISYATK</sequence>
<proteinExistence type="inferred from homology"/>